<keyword id="KW-0966">Cell projection</keyword>
<keyword id="KW-0969">Cilium</keyword>
<keyword id="KW-0433">Leucine-rich repeat</keyword>
<keyword id="KW-1185">Reference proteome</keyword>
<keyword id="KW-0677">Repeat</keyword>
<name>DAAF1_ANOGA</name>
<gene>
    <name type="ORF">AGAP009594</name>
</gene>
<comment type="function">
    <text evidence="1">Cilium-specific protein required for cilia structures.</text>
</comment>
<comment type="subcellular location">
    <subcellularLocation>
        <location evidence="1">Cell projection</location>
        <location evidence="1">Cilium</location>
    </subcellularLocation>
</comment>
<comment type="similarity">
    <text evidence="3">Belongs to the DNAAF1 family.</text>
</comment>
<organism>
    <name type="scientific">Anopheles gambiae</name>
    <name type="common">African malaria mosquito</name>
    <dbReference type="NCBI Taxonomy" id="7165"/>
    <lineage>
        <taxon>Eukaryota</taxon>
        <taxon>Metazoa</taxon>
        <taxon>Ecdysozoa</taxon>
        <taxon>Arthropoda</taxon>
        <taxon>Hexapoda</taxon>
        <taxon>Insecta</taxon>
        <taxon>Pterygota</taxon>
        <taxon>Neoptera</taxon>
        <taxon>Endopterygota</taxon>
        <taxon>Diptera</taxon>
        <taxon>Nematocera</taxon>
        <taxon>Culicoidea</taxon>
        <taxon>Culicidae</taxon>
        <taxon>Anophelinae</taxon>
        <taxon>Anopheles</taxon>
    </lineage>
</organism>
<proteinExistence type="inferred from homology"/>
<evidence type="ECO:0000250" key="1"/>
<evidence type="ECO:0000256" key="2">
    <source>
        <dbReference type="SAM" id="MobiDB-lite"/>
    </source>
</evidence>
<evidence type="ECO:0000305" key="3"/>
<reference key="1">
    <citation type="journal article" date="2002" name="Science">
        <title>The genome sequence of the malaria mosquito Anopheles gambiae.</title>
        <authorList>
            <person name="Holt R.A."/>
            <person name="Subramanian G.M."/>
            <person name="Halpern A."/>
            <person name="Sutton G.G."/>
            <person name="Charlab R."/>
            <person name="Nusskern D.R."/>
            <person name="Wincker P."/>
            <person name="Clark A.G."/>
            <person name="Ribeiro J.M.C."/>
            <person name="Wides R."/>
            <person name="Salzberg S.L."/>
            <person name="Loftus B.J."/>
            <person name="Yandell M.D."/>
            <person name="Majoros W.H."/>
            <person name="Rusch D.B."/>
            <person name="Lai Z."/>
            <person name="Kraft C.L."/>
            <person name="Abril J.F."/>
            <person name="Anthouard V."/>
            <person name="Arensburger P."/>
            <person name="Atkinson P.W."/>
            <person name="Baden H."/>
            <person name="de Berardinis V."/>
            <person name="Baldwin D."/>
            <person name="Benes V."/>
            <person name="Biedler J."/>
            <person name="Blass C."/>
            <person name="Bolanos R."/>
            <person name="Boscus D."/>
            <person name="Barnstead M."/>
            <person name="Cai S."/>
            <person name="Center A."/>
            <person name="Chaturverdi K."/>
            <person name="Christophides G.K."/>
            <person name="Chrystal M.A.M."/>
            <person name="Clamp M."/>
            <person name="Cravchik A."/>
            <person name="Curwen V."/>
            <person name="Dana A."/>
            <person name="Delcher A."/>
            <person name="Dew I."/>
            <person name="Evans C.A."/>
            <person name="Flanigan M."/>
            <person name="Grundschober-Freimoser A."/>
            <person name="Friedli L."/>
            <person name="Gu Z."/>
            <person name="Guan P."/>
            <person name="Guigo R."/>
            <person name="Hillenmeyer M.E."/>
            <person name="Hladun S.L."/>
            <person name="Hogan J.R."/>
            <person name="Hong Y.S."/>
            <person name="Hoover J."/>
            <person name="Jaillon O."/>
            <person name="Ke Z."/>
            <person name="Kodira C.D."/>
            <person name="Kokoza E."/>
            <person name="Koutsos A."/>
            <person name="Letunic I."/>
            <person name="Levitsky A.A."/>
            <person name="Liang Y."/>
            <person name="Lin J.-J."/>
            <person name="Lobo N.F."/>
            <person name="Lopez J.R."/>
            <person name="Malek J.A."/>
            <person name="McIntosh T.C."/>
            <person name="Meister S."/>
            <person name="Miller J.R."/>
            <person name="Mobarry C."/>
            <person name="Mongin E."/>
            <person name="Murphy S.D."/>
            <person name="O'Brochta D.A."/>
            <person name="Pfannkoch C."/>
            <person name="Qi R."/>
            <person name="Regier M.A."/>
            <person name="Remington K."/>
            <person name="Shao H."/>
            <person name="Sharakhova M.V."/>
            <person name="Sitter C.D."/>
            <person name="Shetty J."/>
            <person name="Smith T.J."/>
            <person name="Strong R."/>
            <person name="Sun J."/>
            <person name="Thomasova D."/>
            <person name="Ton L.Q."/>
            <person name="Topalis P."/>
            <person name="Tu Z.J."/>
            <person name="Unger M.F."/>
            <person name="Walenz B."/>
            <person name="Wang A.H."/>
            <person name="Wang J."/>
            <person name="Wang M."/>
            <person name="Wang X."/>
            <person name="Woodford K.J."/>
            <person name="Wortman J.R."/>
            <person name="Wu M."/>
            <person name="Yao A."/>
            <person name="Zdobnov E.M."/>
            <person name="Zhang H."/>
            <person name="Zhao Q."/>
            <person name="Zhao S."/>
            <person name="Zhu S.C."/>
            <person name="Zhimulev I."/>
            <person name="Coluzzi M."/>
            <person name="della Torre A."/>
            <person name="Roth C.W."/>
            <person name="Louis C."/>
            <person name="Kalush F."/>
            <person name="Mural R.J."/>
            <person name="Myers E.W."/>
            <person name="Adams M.D."/>
            <person name="Smith H.O."/>
            <person name="Broder S."/>
            <person name="Gardner M.J."/>
            <person name="Fraser C.M."/>
            <person name="Birney E."/>
            <person name="Bork P."/>
            <person name="Brey P.T."/>
            <person name="Venter J.C."/>
            <person name="Weissenbach J."/>
            <person name="Kafatos F.C."/>
            <person name="Collins F.H."/>
            <person name="Hoffman S.L."/>
        </authorList>
    </citation>
    <scope>NUCLEOTIDE SEQUENCE [LARGE SCALE GENOMIC DNA]</scope>
    <source>
        <strain>PEST</strain>
    </source>
</reference>
<dbReference type="EMBL" id="AAAB01008980">
    <property type="protein sequence ID" value="EAA43462.2"/>
    <property type="molecule type" value="Genomic_DNA"/>
</dbReference>
<dbReference type="RefSeq" id="XP_318616.2">
    <property type="nucleotide sequence ID" value="XM_318616.2"/>
</dbReference>
<dbReference type="SMR" id="Q7PK92"/>
<dbReference type="STRING" id="7165.Q7PK92"/>
<dbReference type="PaxDb" id="7165-AGAP009594-PA"/>
<dbReference type="VEuPathDB" id="VectorBase:AGAMI1_005323"/>
<dbReference type="VEuPathDB" id="VectorBase:AGAP009594"/>
<dbReference type="eggNOG" id="ENOG502QQFE">
    <property type="taxonomic scope" value="Eukaryota"/>
</dbReference>
<dbReference type="HOGENOM" id="CLU_282320_0_0_1"/>
<dbReference type="InParanoid" id="Q7PK92"/>
<dbReference type="OMA" id="ENCGSDI"/>
<dbReference type="PhylomeDB" id="Q7PK92"/>
<dbReference type="Proteomes" id="UP000007062">
    <property type="component" value="Chromosome 3R"/>
</dbReference>
<dbReference type="GO" id="GO:0005930">
    <property type="term" value="C:axoneme"/>
    <property type="evidence" value="ECO:0000250"/>
    <property type="project" value="UniProtKB"/>
</dbReference>
<dbReference type="GO" id="GO:0070840">
    <property type="term" value="F:dynein complex binding"/>
    <property type="evidence" value="ECO:0000250"/>
    <property type="project" value="UniProtKB"/>
</dbReference>
<dbReference type="GO" id="GO:0035082">
    <property type="term" value="P:axoneme assembly"/>
    <property type="evidence" value="ECO:0000318"/>
    <property type="project" value="GO_Central"/>
</dbReference>
<dbReference type="GO" id="GO:0060271">
    <property type="term" value="P:cilium assembly"/>
    <property type="evidence" value="ECO:0000250"/>
    <property type="project" value="UniProtKB"/>
</dbReference>
<dbReference type="FunFam" id="3.80.10.10:FF:000166">
    <property type="entry name" value="Dynein assembly factor 1, axonemal"/>
    <property type="match status" value="1"/>
</dbReference>
<dbReference type="FunFam" id="3.80.10.10:FF:000331">
    <property type="entry name" value="Dynein assembly factor 1, axonemal homolog"/>
    <property type="match status" value="1"/>
</dbReference>
<dbReference type="Gene3D" id="3.80.10.10">
    <property type="entry name" value="Ribonuclease Inhibitor"/>
    <property type="match status" value="2"/>
</dbReference>
<dbReference type="InterPro" id="IPR050576">
    <property type="entry name" value="Cilia_flagella_integrity"/>
</dbReference>
<dbReference type="InterPro" id="IPR001611">
    <property type="entry name" value="Leu-rich_rpt"/>
</dbReference>
<dbReference type="InterPro" id="IPR025875">
    <property type="entry name" value="Leu-rich_rpt_4"/>
</dbReference>
<dbReference type="InterPro" id="IPR032675">
    <property type="entry name" value="LRR_dom_sf"/>
</dbReference>
<dbReference type="PANTHER" id="PTHR45973:SF9">
    <property type="entry name" value="LEUCINE-RICH REPEAT-CONTAINING PROTEIN 46"/>
    <property type="match status" value="1"/>
</dbReference>
<dbReference type="PANTHER" id="PTHR45973">
    <property type="entry name" value="PROTEIN PHOSPHATASE 1 REGULATORY SUBUNIT SDS22-RELATED"/>
    <property type="match status" value="1"/>
</dbReference>
<dbReference type="Pfam" id="PF12799">
    <property type="entry name" value="LRR_4"/>
    <property type="match status" value="1"/>
</dbReference>
<dbReference type="SMART" id="SM00365">
    <property type="entry name" value="LRR_SD22"/>
    <property type="match status" value="4"/>
</dbReference>
<dbReference type="SUPFAM" id="SSF52075">
    <property type="entry name" value="Outer arm dynein light chain 1"/>
    <property type="match status" value="1"/>
</dbReference>
<dbReference type="PROSITE" id="PS51450">
    <property type="entry name" value="LRR"/>
    <property type="match status" value="6"/>
</dbReference>
<accession>Q7PK92</accession>
<sequence length="910" mass="104016">MTKKTIQASCRKNKLYLTPHLNDVLYLHYSGYNAIDGLDEYVGLKCLWLECNAISNISGLDHQSQLRCLYLHNNLIKKIENLQHCKQLDTLNLSHNHIAKIENCGSDILPVLNTLNISHNYLKSIESLAELRKCDFVSVLDISHNRIEDIAIVKVLADMKGLRVLTLVGNPVVNDIPSYRKTLILECKSLTYLDSRPVFDKDRACAEAWKRGGYEEERKEHQRWKKEEQRKMRRSINATLRLRHRGDGEPELLKTSSDEEEEEKEGSAAGRGDFEELEYQSNDVAWKEMEALFNQHTKGDTQQAQKLAEERKASTNSVDYITGSDSNSDPTLVTDCDSCVRNSSRACSSRSDTSDSEDMFDKIVPKKHRKLASSMRPEVSLSDSSSSSSETEDEAGSILDSKLDRQNTITEFIDEYKRFFHSVDLRDPKCVLKNRHKIVRPQTAKSQRTEPIVYEGVLKAMEQNSNGAKIEQARQERFEANERSLAKEAVLERLMKGHAEVDMNIEQQMISIGGKQHNFNEYRLEVFRQDQEKLQNLIDRVTAQKEKYNAHIDSIHDQLANIMEDYGQISEKLRKVDDMIQNIGDEVVVHQEKERDGLEVIQELEPITIAEQIVENMTKEQVPDEVEANDKASDATIDPVDQLSSDESAIDLGELNQHVDAQVEVGPSDPKDATTSKPIPEEFGSDPVYRKFIDIQYEIDKLTEDQIFTALSEAARELQEEELETKLVHDAIDEYWSTDLEDFRRNLNLDAHPIVQRFKRFIECQGTDTDDTDSEAHVRRLENAYHRYERRLSNHLFDEYLMLSRKASIATTTGGESSATELELVELDGGHVLRASTSRRATAWDLKETVEDPVEELEELNEEEDPALKEAGDFKHDELEDEESKPEEKTLKSAEVLGMQEPLADVQGDH</sequence>
<protein>
    <recommendedName>
        <fullName>Dynein axonemal assembly factor 1 homolog</fullName>
    </recommendedName>
    <alternativeName>
        <fullName>Leucine-rich repeat-containing protein 50</fullName>
    </alternativeName>
</protein>
<feature type="chain" id="PRO_0000363935" description="Dynein axonemal assembly factor 1 homolog">
    <location>
        <begin position="1"/>
        <end position="910"/>
    </location>
</feature>
<feature type="repeat" description="LRR 1">
    <location>
        <begin position="43"/>
        <end position="64"/>
    </location>
</feature>
<feature type="repeat" description="LRR 2">
    <location>
        <begin position="65"/>
        <end position="86"/>
    </location>
</feature>
<feature type="repeat" description="LRR 3">
    <location>
        <begin position="87"/>
        <end position="108"/>
    </location>
</feature>
<feature type="repeat" description="LRR 4">
    <location>
        <begin position="111"/>
        <end position="132"/>
    </location>
</feature>
<feature type="repeat" description="LRR 5">
    <location>
        <begin position="136"/>
        <end position="157"/>
    </location>
</feature>
<feature type="domain" description="LRRCT">
    <location>
        <begin position="171"/>
        <end position="209"/>
    </location>
</feature>
<feature type="region of interest" description="Disordered" evidence="2">
    <location>
        <begin position="217"/>
        <end position="275"/>
    </location>
</feature>
<feature type="region of interest" description="Disordered" evidence="2">
    <location>
        <begin position="297"/>
        <end position="332"/>
    </location>
</feature>
<feature type="region of interest" description="Disordered" evidence="2">
    <location>
        <begin position="344"/>
        <end position="399"/>
    </location>
</feature>
<feature type="region of interest" description="Disordered" evidence="2">
    <location>
        <begin position="620"/>
        <end position="642"/>
    </location>
</feature>
<feature type="region of interest" description="Disordered" evidence="2">
    <location>
        <begin position="662"/>
        <end position="682"/>
    </location>
</feature>
<feature type="region of interest" description="Disordered" evidence="2">
    <location>
        <begin position="855"/>
        <end position="910"/>
    </location>
</feature>
<feature type="compositionally biased region" description="Basic and acidic residues" evidence="2">
    <location>
        <begin position="217"/>
        <end position="230"/>
    </location>
</feature>
<feature type="compositionally biased region" description="Polar residues" evidence="2">
    <location>
        <begin position="314"/>
        <end position="331"/>
    </location>
</feature>
<feature type="compositionally biased region" description="Low complexity" evidence="2">
    <location>
        <begin position="380"/>
        <end position="389"/>
    </location>
</feature>
<feature type="compositionally biased region" description="Basic and acidic residues" evidence="2">
    <location>
        <begin position="620"/>
        <end position="633"/>
    </location>
</feature>
<feature type="compositionally biased region" description="Acidic residues" evidence="2">
    <location>
        <begin position="855"/>
        <end position="865"/>
    </location>
</feature>
<feature type="compositionally biased region" description="Basic and acidic residues" evidence="2">
    <location>
        <begin position="866"/>
        <end position="878"/>
    </location>
</feature>